<reference key="1">
    <citation type="journal article" date="2004" name="Nat. Genet.">
        <title>Complete sequencing and characterization of 21,243 full-length human cDNAs.</title>
        <authorList>
            <person name="Ota T."/>
            <person name="Suzuki Y."/>
            <person name="Nishikawa T."/>
            <person name="Otsuki T."/>
            <person name="Sugiyama T."/>
            <person name="Irie R."/>
            <person name="Wakamatsu A."/>
            <person name="Hayashi K."/>
            <person name="Sato H."/>
            <person name="Nagai K."/>
            <person name="Kimura K."/>
            <person name="Makita H."/>
            <person name="Sekine M."/>
            <person name="Obayashi M."/>
            <person name="Nishi T."/>
            <person name="Shibahara T."/>
            <person name="Tanaka T."/>
            <person name="Ishii S."/>
            <person name="Yamamoto J."/>
            <person name="Saito K."/>
            <person name="Kawai Y."/>
            <person name="Isono Y."/>
            <person name="Nakamura Y."/>
            <person name="Nagahari K."/>
            <person name="Murakami K."/>
            <person name="Yasuda T."/>
            <person name="Iwayanagi T."/>
            <person name="Wagatsuma M."/>
            <person name="Shiratori A."/>
            <person name="Sudo H."/>
            <person name="Hosoiri T."/>
            <person name="Kaku Y."/>
            <person name="Kodaira H."/>
            <person name="Kondo H."/>
            <person name="Sugawara M."/>
            <person name="Takahashi M."/>
            <person name="Kanda K."/>
            <person name="Yokoi T."/>
            <person name="Furuya T."/>
            <person name="Kikkawa E."/>
            <person name="Omura Y."/>
            <person name="Abe K."/>
            <person name="Kamihara K."/>
            <person name="Katsuta N."/>
            <person name="Sato K."/>
            <person name="Tanikawa M."/>
            <person name="Yamazaki M."/>
            <person name="Ninomiya K."/>
            <person name="Ishibashi T."/>
            <person name="Yamashita H."/>
            <person name="Murakawa K."/>
            <person name="Fujimori K."/>
            <person name="Tanai H."/>
            <person name="Kimata M."/>
            <person name="Watanabe M."/>
            <person name="Hiraoka S."/>
            <person name="Chiba Y."/>
            <person name="Ishida S."/>
            <person name="Ono Y."/>
            <person name="Takiguchi S."/>
            <person name="Watanabe S."/>
            <person name="Yosida M."/>
            <person name="Hotuta T."/>
            <person name="Kusano J."/>
            <person name="Kanehori K."/>
            <person name="Takahashi-Fujii A."/>
            <person name="Hara H."/>
            <person name="Tanase T.-O."/>
            <person name="Nomura Y."/>
            <person name="Togiya S."/>
            <person name="Komai F."/>
            <person name="Hara R."/>
            <person name="Takeuchi K."/>
            <person name="Arita M."/>
            <person name="Imose N."/>
            <person name="Musashino K."/>
            <person name="Yuuki H."/>
            <person name="Oshima A."/>
            <person name="Sasaki N."/>
            <person name="Aotsuka S."/>
            <person name="Yoshikawa Y."/>
            <person name="Matsunawa H."/>
            <person name="Ichihara T."/>
            <person name="Shiohata N."/>
            <person name="Sano S."/>
            <person name="Moriya S."/>
            <person name="Momiyama H."/>
            <person name="Satoh N."/>
            <person name="Takami S."/>
            <person name="Terashima Y."/>
            <person name="Suzuki O."/>
            <person name="Nakagawa S."/>
            <person name="Senoh A."/>
            <person name="Mizoguchi H."/>
            <person name="Goto Y."/>
            <person name="Shimizu F."/>
            <person name="Wakebe H."/>
            <person name="Hishigaki H."/>
            <person name="Watanabe T."/>
            <person name="Sugiyama A."/>
            <person name="Takemoto M."/>
            <person name="Kawakami B."/>
            <person name="Yamazaki M."/>
            <person name="Watanabe K."/>
            <person name="Kumagai A."/>
            <person name="Itakura S."/>
            <person name="Fukuzumi Y."/>
            <person name="Fujimori Y."/>
            <person name="Komiyama M."/>
            <person name="Tashiro H."/>
            <person name="Tanigami A."/>
            <person name="Fujiwara T."/>
            <person name="Ono T."/>
            <person name="Yamada K."/>
            <person name="Fujii Y."/>
            <person name="Ozaki K."/>
            <person name="Hirao M."/>
            <person name="Ohmori Y."/>
            <person name="Kawabata A."/>
            <person name="Hikiji T."/>
            <person name="Kobatake N."/>
            <person name="Inagaki H."/>
            <person name="Ikema Y."/>
            <person name="Okamoto S."/>
            <person name="Okitani R."/>
            <person name="Kawakami T."/>
            <person name="Noguchi S."/>
            <person name="Itoh T."/>
            <person name="Shigeta K."/>
            <person name="Senba T."/>
            <person name="Matsumura K."/>
            <person name="Nakajima Y."/>
            <person name="Mizuno T."/>
            <person name="Morinaga M."/>
            <person name="Sasaki M."/>
            <person name="Togashi T."/>
            <person name="Oyama M."/>
            <person name="Hata H."/>
            <person name="Watanabe M."/>
            <person name="Komatsu T."/>
            <person name="Mizushima-Sugano J."/>
            <person name="Satoh T."/>
            <person name="Shirai Y."/>
            <person name="Takahashi Y."/>
            <person name="Nakagawa K."/>
            <person name="Okumura K."/>
            <person name="Nagase T."/>
            <person name="Nomura N."/>
            <person name="Kikuchi H."/>
            <person name="Masuho Y."/>
            <person name="Yamashita R."/>
            <person name="Nakai K."/>
            <person name="Yada T."/>
            <person name="Nakamura Y."/>
            <person name="Ohara O."/>
            <person name="Isogai T."/>
            <person name="Sugano S."/>
        </authorList>
    </citation>
    <scope>NUCLEOTIDE SEQUENCE [LARGE SCALE MRNA]</scope>
    <source>
        <tissue>Brain</tissue>
    </source>
</reference>
<reference key="2">
    <citation type="journal article" date="2006" name="Nature">
        <title>The finished DNA sequence of human chromosome 12.</title>
        <authorList>
            <person name="Scherer S.E."/>
            <person name="Muzny D.M."/>
            <person name="Buhay C.J."/>
            <person name="Chen R."/>
            <person name="Cree A."/>
            <person name="Ding Y."/>
            <person name="Dugan-Rocha S."/>
            <person name="Gill R."/>
            <person name="Gunaratne P."/>
            <person name="Harris R.A."/>
            <person name="Hawes A.C."/>
            <person name="Hernandez J."/>
            <person name="Hodgson A.V."/>
            <person name="Hume J."/>
            <person name="Jackson A."/>
            <person name="Khan Z.M."/>
            <person name="Kovar-Smith C."/>
            <person name="Lewis L.R."/>
            <person name="Lozado R.J."/>
            <person name="Metzker M.L."/>
            <person name="Milosavljevic A."/>
            <person name="Miner G.R."/>
            <person name="Montgomery K.T."/>
            <person name="Morgan M.B."/>
            <person name="Nazareth L.V."/>
            <person name="Scott G."/>
            <person name="Sodergren E."/>
            <person name="Song X.-Z."/>
            <person name="Steffen D."/>
            <person name="Lovering R.C."/>
            <person name="Wheeler D.A."/>
            <person name="Worley K.C."/>
            <person name="Yuan Y."/>
            <person name="Zhang Z."/>
            <person name="Adams C.Q."/>
            <person name="Ansari-Lari M.A."/>
            <person name="Ayele M."/>
            <person name="Brown M.J."/>
            <person name="Chen G."/>
            <person name="Chen Z."/>
            <person name="Clerc-Blankenburg K.P."/>
            <person name="Davis C."/>
            <person name="Delgado O."/>
            <person name="Dinh H.H."/>
            <person name="Draper H."/>
            <person name="Gonzalez-Garay M.L."/>
            <person name="Havlak P."/>
            <person name="Jackson L.R."/>
            <person name="Jacob L.S."/>
            <person name="Kelly S.H."/>
            <person name="Li L."/>
            <person name="Li Z."/>
            <person name="Liu J."/>
            <person name="Liu W."/>
            <person name="Lu J."/>
            <person name="Maheshwari M."/>
            <person name="Nguyen B.-V."/>
            <person name="Okwuonu G.O."/>
            <person name="Pasternak S."/>
            <person name="Perez L.M."/>
            <person name="Plopper F.J.H."/>
            <person name="Santibanez J."/>
            <person name="Shen H."/>
            <person name="Tabor P.E."/>
            <person name="Verduzco D."/>
            <person name="Waldron L."/>
            <person name="Wang Q."/>
            <person name="Williams G.A."/>
            <person name="Zhang J."/>
            <person name="Zhou J."/>
            <person name="Allen C.C."/>
            <person name="Amin A.G."/>
            <person name="Anyalebechi V."/>
            <person name="Bailey M."/>
            <person name="Barbaria J.A."/>
            <person name="Bimage K.E."/>
            <person name="Bryant N.P."/>
            <person name="Burch P.E."/>
            <person name="Burkett C.E."/>
            <person name="Burrell K.L."/>
            <person name="Calderon E."/>
            <person name="Cardenas V."/>
            <person name="Carter K."/>
            <person name="Casias K."/>
            <person name="Cavazos I."/>
            <person name="Cavazos S.R."/>
            <person name="Ceasar H."/>
            <person name="Chacko J."/>
            <person name="Chan S.N."/>
            <person name="Chavez D."/>
            <person name="Christopoulos C."/>
            <person name="Chu J."/>
            <person name="Cockrell R."/>
            <person name="Cox C.D."/>
            <person name="Dang M."/>
            <person name="Dathorne S.R."/>
            <person name="David R."/>
            <person name="Davis C.M."/>
            <person name="Davy-Carroll L."/>
            <person name="Deshazo D.R."/>
            <person name="Donlin J.E."/>
            <person name="D'Souza L."/>
            <person name="Eaves K.A."/>
            <person name="Egan A."/>
            <person name="Emery-Cohen A.J."/>
            <person name="Escotto M."/>
            <person name="Flagg N."/>
            <person name="Forbes L.D."/>
            <person name="Gabisi A.M."/>
            <person name="Garza M."/>
            <person name="Hamilton C."/>
            <person name="Henderson N."/>
            <person name="Hernandez O."/>
            <person name="Hines S."/>
            <person name="Hogues M.E."/>
            <person name="Huang M."/>
            <person name="Idlebird D.G."/>
            <person name="Johnson R."/>
            <person name="Jolivet A."/>
            <person name="Jones S."/>
            <person name="Kagan R."/>
            <person name="King L.M."/>
            <person name="Leal B."/>
            <person name="Lebow H."/>
            <person name="Lee S."/>
            <person name="LeVan J.M."/>
            <person name="Lewis L.C."/>
            <person name="London P."/>
            <person name="Lorensuhewa L.M."/>
            <person name="Loulseged H."/>
            <person name="Lovett D.A."/>
            <person name="Lucier A."/>
            <person name="Lucier R.L."/>
            <person name="Ma J."/>
            <person name="Madu R.C."/>
            <person name="Mapua P."/>
            <person name="Martindale A.D."/>
            <person name="Martinez E."/>
            <person name="Massey E."/>
            <person name="Mawhiney S."/>
            <person name="Meador M.G."/>
            <person name="Mendez S."/>
            <person name="Mercado C."/>
            <person name="Mercado I.C."/>
            <person name="Merritt C.E."/>
            <person name="Miner Z.L."/>
            <person name="Minja E."/>
            <person name="Mitchell T."/>
            <person name="Mohabbat F."/>
            <person name="Mohabbat K."/>
            <person name="Montgomery B."/>
            <person name="Moore N."/>
            <person name="Morris S."/>
            <person name="Munidasa M."/>
            <person name="Ngo R.N."/>
            <person name="Nguyen N.B."/>
            <person name="Nickerson E."/>
            <person name="Nwaokelemeh O.O."/>
            <person name="Nwokenkwo S."/>
            <person name="Obregon M."/>
            <person name="Oguh M."/>
            <person name="Oragunye N."/>
            <person name="Oviedo R.J."/>
            <person name="Parish B.J."/>
            <person name="Parker D.N."/>
            <person name="Parrish J."/>
            <person name="Parks K.L."/>
            <person name="Paul H.A."/>
            <person name="Payton B.A."/>
            <person name="Perez A."/>
            <person name="Perrin W."/>
            <person name="Pickens A."/>
            <person name="Primus E.L."/>
            <person name="Pu L.-L."/>
            <person name="Puazo M."/>
            <person name="Quiles M.M."/>
            <person name="Quiroz J.B."/>
            <person name="Rabata D."/>
            <person name="Reeves K."/>
            <person name="Ruiz S.J."/>
            <person name="Shao H."/>
            <person name="Sisson I."/>
            <person name="Sonaike T."/>
            <person name="Sorelle R.P."/>
            <person name="Sutton A.E."/>
            <person name="Svatek A.F."/>
            <person name="Svetz L.A."/>
            <person name="Tamerisa K.S."/>
            <person name="Taylor T.R."/>
            <person name="Teague B."/>
            <person name="Thomas N."/>
            <person name="Thorn R.D."/>
            <person name="Trejos Z.Y."/>
            <person name="Trevino B.K."/>
            <person name="Ukegbu O.N."/>
            <person name="Urban J.B."/>
            <person name="Vasquez L.I."/>
            <person name="Vera V.A."/>
            <person name="Villasana D.M."/>
            <person name="Wang L."/>
            <person name="Ward-Moore S."/>
            <person name="Warren J.T."/>
            <person name="Wei X."/>
            <person name="White F."/>
            <person name="Williamson A.L."/>
            <person name="Wleczyk R."/>
            <person name="Wooden H.S."/>
            <person name="Wooden S.H."/>
            <person name="Yen J."/>
            <person name="Yoon L."/>
            <person name="Yoon V."/>
            <person name="Zorrilla S.E."/>
            <person name="Nelson D."/>
            <person name="Kucherlapati R."/>
            <person name="Weinstock G."/>
            <person name="Gibbs R.A."/>
        </authorList>
    </citation>
    <scope>NUCLEOTIDE SEQUENCE [LARGE SCALE GENOMIC DNA]</scope>
</reference>
<reference key="3">
    <citation type="journal article" date="2004" name="Genome Res.">
        <title>The status, quality, and expansion of the NIH full-length cDNA project: the Mammalian Gene Collection (MGC).</title>
        <authorList>
            <consortium name="The MGC Project Team"/>
        </authorList>
    </citation>
    <scope>NUCLEOTIDE SEQUENCE [LARGE SCALE MRNA]</scope>
    <source>
        <tissue>Brain</tissue>
        <tissue>Testis</tissue>
        <tissue>Uterus</tissue>
    </source>
</reference>
<reference key="4">
    <citation type="journal article" date="1989" name="Nucleic Acids Res.">
        <title>Sequence of a cDNA specifying subunit VIa of human cytochrome c oxidase.</title>
        <authorList>
            <person name="Fabrizi G.M."/>
            <person name="Rizzuto R."/>
            <person name="Nakase H."/>
            <person name="Mita S."/>
            <person name="Kadenbach B."/>
            <person name="Schon E.A."/>
        </authorList>
    </citation>
    <scope>NUCLEOTIDE SEQUENCE [MRNA] OF 3-109</scope>
    <source>
        <tissue>Liver</tissue>
    </source>
</reference>
<reference key="5">
    <citation type="journal article" date="1992" name="Electrophoresis">
        <title>Human liver protein map: a reference database established by microsequencing and gel comparison.</title>
        <authorList>
            <person name="Hochstrasser D.F."/>
            <person name="Frutiger S."/>
            <person name="Paquet N."/>
            <person name="Bairoch A."/>
            <person name="Ravier F."/>
            <person name="Pasquali C."/>
            <person name="Sanchez J.-C."/>
            <person name="Tissot J.-D."/>
            <person name="Bjellqvist B."/>
            <person name="Vargas R."/>
            <person name="Appel R.D."/>
            <person name="Hughes G.J."/>
        </authorList>
    </citation>
    <scope>PROTEIN SEQUENCE OF 25-36</scope>
    <source>
        <tissue>Liver</tissue>
    </source>
</reference>
<reference key="6">
    <citation type="journal article" date="2014" name="Am. J. Hum. Genet.">
        <title>A mutation of COX6A1 causes a recessive axonal or mixed form of Charcot-Marie-Tooth disease.</title>
        <authorList>
            <person name="Tamiya G."/>
            <person name="Makino S."/>
            <person name="Hayashi M."/>
            <person name="Abe A."/>
            <person name="Numakura C."/>
            <person name="Ueki M."/>
            <person name="Tanaka A."/>
            <person name="Ito C."/>
            <person name="Toshimori K."/>
            <person name="Ogawa N."/>
            <person name="Terashima T."/>
            <person name="Maegawa H."/>
            <person name="Yanagisawa D."/>
            <person name="Tooyama I."/>
            <person name="Tada M."/>
            <person name="Onodera O."/>
            <person name="Hayasaka K."/>
        </authorList>
    </citation>
    <scope>INVOLVEMENT IN CMTRID</scope>
</reference>
<reference key="7">
    <citation type="journal article" date="2015" name="Proteomics">
        <title>N-terminome analysis of the human mitochondrial proteome.</title>
        <authorList>
            <person name="Vaca Jacome A.S."/>
            <person name="Rabilloud T."/>
            <person name="Schaeffer-Reiss C."/>
            <person name="Rompais M."/>
            <person name="Ayoub D."/>
            <person name="Lane L."/>
            <person name="Bairoch A."/>
            <person name="Van Dorsselaer A."/>
            <person name="Carapito C."/>
        </authorList>
    </citation>
    <scope>IDENTIFICATION BY MASS SPECTROMETRY [LARGE SCALE ANALYSIS]</scope>
</reference>
<reference key="8">
    <citation type="journal article" date="2017" name="Cell">
        <title>Architecture of human mitochondrial respiratory megacomplex I2III2IV2.</title>
        <authorList>
            <person name="Guo R."/>
            <person name="Zong S."/>
            <person name="Wu M."/>
            <person name="Gu J."/>
            <person name="Yang M."/>
        </authorList>
    </citation>
    <scope>STRUCTURE BY ELECTRON MICROSCOPY (3.90 ANGSTROMS)</scope>
    <scope>SUBUNIT</scope>
</reference>
<reference key="9">
    <citation type="journal article" date="2018" name="Cell Res.">
        <title>Structure of the intact 14-subunit human cytochrome c oxidase.</title>
        <authorList>
            <person name="Zong S."/>
            <person name="Wu M."/>
            <person name="Gu J."/>
            <person name="Liu T."/>
            <person name="Guo R."/>
            <person name="Yang M."/>
        </authorList>
    </citation>
    <scope>STRUCTURE BY ELECTRON MICROSCOPY (3.60 ANGSTROMS) OF 34-109</scope>
</reference>
<keyword id="KW-0002">3D-structure</keyword>
<keyword id="KW-0144">Charcot-Marie-Tooth disease</keyword>
<keyword id="KW-0903">Direct protein sequencing</keyword>
<keyword id="KW-0472">Membrane</keyword>
<keyword id="KW-0496">Mitochondrion</keyword>
<keyword id="KW-0999">Mitochondrion inner membrane</keyword>
<keyword id="KW-0523">Neurodegeneration</keyword>
<keyword id="KW-0622">Neuropathy</keyword>
<keyword id="KW-0560">Oxidoreductase</keyword>
<keyword id="KW-1267">Proteomics identification</keyword>
<keyword id="KW-1185">Reference proteome</keyword>
<keyword id="KW-0809">Transit peptide</keyword>
<keyword id="KW-0812">Transmembrane</keyword>
<keyword id="KW-1133">Transmembrane helix</keyword>
<evidence type="ECO:0000250" key="1">
    <source>
        <dbReference type="UniProtKB" id="P07471"/>
    </source>
</evidence>
<evidence type="ECO:0000250" key="2">
    <source>
        <dbReference type="UniProtKB" id="P32799"/>
    </source>
</evidence>
<evidence type="ECO:0000269" key="3">
    <source>
    </source>
</evidence>
<evidence type="ECO:0000269" key="4">
    <source>
    </source>
</evidence>
<evidence type="ECO:0000269" key="5">
    <source>
    </source>
</evidence>
<evidence type="ECO:0000269" key="6">
    <source>
    </source>
</evidence>
<evidence type="ECO:0000305" key="7"/>
<dbReference type="EMBL" id="AK312009">
    <property type="protein sequence ID" value="BAG34947.1"/>
    <property type="molecule type" value="mRNA"/>
</dbReference>
<dbReference type="EMBL" id="AL021546">
    <property type="status" value="NOT_ANNOTATED_CDS"/>
    <property type="molecule type" value="Genomic_DNA"/>
</dbReference>
<dbReference type="EMBL" id="BC007723">
    <property type="protein sequence ID" value="AAH07723.1"/>
    <property type="molecule type" value="mRNA"/>
</dbReference>
<dbReference type="EMBL" id="BC070186">
    <property type="protein sequence ID" value="AAH70186.1"/>
    <property type="molecule type" value="mRNA"/>
</dbReference>
<dbReference type="EMBL" id="BC107861">
    <property type="protein sequence ID" value="AAI07862.1"/>
    <property type="molecule type" value="mRNA"/>
</dbReference>
<dbReference type="EMBL" id="X15341">
    <property type="protein sequence ID" value="CAA33392.1"/>
    <property type="status" value="ALT_FRAME"/>
    <property type="molecule type" value="mRNA"/>
</dbReference>
<dbReference type="CCDS" id="CCDS9197.1"/>
<dbReference type="RefSeq" id="NP_004364.2">
    <property type="nucleotide sequence ID" value="NM_004373.3"/>
</dbReference>
<dbReference type="PDB" id="5Z62">
    <property type="method" value="EM"/>
    <property type="resolution" value="3.60 A"/>
    <property type="chains" value="G=34-108"/>
</dbReference>
<dbReference type="PDBsum" id="5Z62"/>
<dbReference type="SMR" id="P12074"/>
<dbReference type="BioGRID" id="107730">
    <property type="interactions" value="55"/>
</dbReference>
<dbReference type="ComplexPortal" id="CPX-6123">
    <property type="entry name" value="Mitochondrial respiratory chain complex IV"/>
</dbReference>
<dbReference type="CORUM" id="P12074"/>
<dbReference type="FunCoup" id="P12074">
    <property type="interactions" value="1606"/>
</dbReference>
<dbReference type="IntAct" id="P12074">
    <property type="interactions" value="35"/>
</dbReference>
<dbReference type="STRING" id="9606.ENSP00000229379"/>
<dbReference type="iPTMnet" id="P12074"/>
<dbReference type="PhosphoSitePlus" id="P12074"/>
<dbReference type="BioMuta" id="COX6A1"/>
<dbReference type="DMDM" id="6166030"/>
<dbReference type="jPOST" id="P12074"/>
<dbReference type="MassIVE" id="P12074"/>
<dbReference type="PaxDb" id="9606-ENSP00000229379"/>
<dbReference type="PeptideAtlas" id="P12074"/>
<dbReference type="ProteomicsDB" id="52823"/>
<dbReference type="Pumba" id="P12074"/>
<dbReference type="TopDownProteomics" id="P12074"/>
<dbReference type="Antibodypedia" id="45523">
    <property type="antibodies" value="361 antibodies from 30 providers"/>
</dbReference>
<dbReference type="DNASU" id="1337"/>
<dbReference type="Ensembl" id="ENST00000229379.3">
    <property type="protein sequence ID" value="ENSP00000229379.2"/>
    <property type="gene ID" value="ENSG00000111775.3"/>
</dbReference>
<dbReference type="GeneID" id="1337"/>
<dbReference type="KEGG" id="hsa:1337"/>
<dbReference type="MANE-Select" id="ENST00000229379.3">
    <property type="protein sequence ID" value="ENSP00000229379.2"/>
    <property type="RefSeq nucleotide sequence ID" value="NM_004373.4"/>
    <property type="RefSeq protein sequence ID" value="NP_004364.2"/>
</dbReference>
<dbReference type="UCSC" id="uc001tyf.2">
    <property type="organism name" value="human"/>
</dbReference>
<dbReference type="AGR" id="HGNC:2277"/>
<dbReference type="CTD" id="1337"/>
<dbReference type="DisGeNET" id="1337"/>
<dbReference type="GeneCards" id="COX6A1"/>
<dbReference type="HGNC" id="HGNC:2277">
    <property type="gene designation" value="COX6A1"/>
</dbReference>
<dbReference type="HPA" id="ENSG00000111775">
    <property type="expression patterns" value="Tissue enhanced (brain)"/>
</dbReference>
<dbReference type="MalaCards" id="COX6A1"/>
<dbReference type="MIM" id="602072">
    <property type="type" value="gene"/>
</dbReference>
<dbReference type="MIM" id="616039">
    <property type="type" value="phenotype"/>
</dbReference>
<dbReference type="neXtProt" id="NX_P12074"/>
<dbReference type="OpenTargets" id="ENSG00000111775"/>
<dbReference type="Orphanet" id="435998">
    <property type="disease" value="Autosomal recessive intermediate Charcot-Marie-Tooth disease type D"/>
</dbReference>
<dbReference type="PharmGKB" id="PA26794"/>
<dbReference type="VEuPathDB" id="HostDB:ENSG00000111775"/>
<dbReference type="eggNOG" id="KOG3469">
    <property type="taxonomic scope" value="Eukaryota"/>
</dbReference>
<dbReference type="GeneTree" id="ENSGT00940000154612"/>
<dbReference type="HOGENOM" id="CLU_122515_1_1_1"/>
<dbReference type="InParanoid" id="P12074"/>
<dbReference type="OMA" id="MWKTLTY"/>
<dbReference type="OrthoDB" id="5947505at2759"/>
<dbReference type="PAN-GO" id="P12074">
    <property type="GO annotations" value="3 GO annotations based on evolutionary models"/>
</dbReference>
<dbReference type="PhylomeDB" id="P12074"/>
<dbReference type="TreeFam" id="TF105064"/>
<dbReference type="BioCyc" id="MetaCyc:HS03462-MONOMER"/>
<dbReference type="PathwayCommons" id="P12074"/>
<dbReference type="Reactome" id="R-HSA-5628897">
    <property type="pathway name" value="TP53 Regulates Metabolic Genes"/>
</dbReference>
<dbReference type="Reactome" id="R-HSA-611105">
    <property type="pathway name" value="Respiratory electron transport"/>
</dbReference>
<dbReference type="Reactome" id="R-HSA-9707564">
    <property type="pathway name" value="Cytoprotection by HMOX1"/>
</dbReference>
<dbReference type="Reactome" id="R-HSA-9864848">
    <property type="pathway name" value="Complex IV assembly"/>
</dbReference>
<dbReference type="SignaLink" id="P12074"/>
<dbReference type="SIGNOR" id="P12074"/>
<dbReference type="UniPathway" id="UPA00705"/>
<dbReference type="BioGRID-ORCS" id="1337">
    <property type="hits" value="123 hits in 1117 CRISPR screens"/>
</dbReference>
<dbReference type="ChiTaRS" id="COX6A1">
    <property type="organism name" value="human"/>
</dbReference>
<dbReference type="GeneWiki" id="COX6A1"/>
<dbReference type="GenomeRNAi" id="1337"/>
<dbReference type="Pharos" id="P12074">
    <property type="development level" value="Tbio"/>
</dbReference>
<dbReference type="PRO" id="PR:P12074"/>
<dbReference type="Proteomes" id="UP000005640">
    <property type="component" value="Chromosome 12"/>
</dbReference>
<dbReference type="RNAct" id="P12074">
    <property type="molecule type" value="protein"/>
</dbReference>
<dbReference type="Bgee" id="ENSG00000111775">
    <property type="expression patterns" value="Expressed in prefrontal cortex and 101 other cell types or tissues"/>
</dbReference>
<dbReference type="ExpressionAtlas" id="P12074">
    <property type="expression patterns" value="baseline and differential"/>
</dbReference>
<dbReference type="GO" id="GO:0005743">
    <property type="term" value="C:mitochondrial inner membrane"/>
    <property type="evidence" value="ECO:0000304"/>
    <property type="project" value="Reactome"/>
</dbReference>
<dbReference type="GO" id="GO:0031966">
    <property type="term" value="C:mitochondrial membrane"/>
    <property type="evidence" value="ECO:0000314"/>
    <property type="project" value="ComplexPortal"/>
</dbReference>
<dbReference type="GO" id="GO:0005739">
    <property type="term" value="C:mitochondrion"/>
    <property type="evidence" value="ECO:0000314"/>
    <property type="project" value="HPA"/>
</dbReference>
<dbReference type="GO" id="GO:0045277">
    <property type="term" value="C:respiratory chain complex IV"/>
    <property type="evidence" value="ECO:0000318"/>
    <property type="project" value="GO_Central"/>
</dbReference>
<dbReference type="GO" id="GO:0030234">
    <property type="term" value="F:enzyme regulator activity"/>
    <property type="evidence" value="ECO:0000318"/>
    <property type="project" value="GO_Central"/>
</dbReference>
<dbReference type="GO" id="GO:0016491">
    <property type="term" value="F:oxidoreductase activity"/>
    <property type="evidence" value="ECO:0007669"/>
    <property type="project" value="UniProtKB-KW"/>
</dbReference>
<dbReference type="GO" id="GO:0045333">
    <property type="term" value="P:cellular respiration"/>
    <property type="evidence" value="ECO:0000303"/>
    <property type="project" value="ComplexPortal"/>
</dbReference>
<dbReference type="GO" id="GO:0006091">
    <property type="term" value="P:generation of precursor metabolites and energy"/>
    <property type="evidence" value="ECO:0000304"/>
    <property type="project" value="ProtInc"/>
</dbReference>
<dbReference type="GO" id="GO:0006123">
    <property type="term" value="P:mitochondrial electron transport, cytochrome c to oxygen"/>
    <property type="evidence" value="ECO:0000318"/>
    <property type="project" value="GO_Central"/>
</dbReference>
<dbReference type="CDD" id="cd00925">
    <property type="entry name" value="Cyt_c_Oxidase_VIa"/>
    <property type="match status" value="1"/>
</dbReference>
<dbReference type="FunFam" id="4.10.95.10:FF:000001">
    <property type="entry name" value="Cytochrome c oxidase subunit 6A, mitochondrial"/>
    <property type="match status" value="1"/>
</dbReference>
<dbReference type="Gene3D" id="4.10.95.10">
    <property type="entry name" value="Cytochrome c oxidase, subunit VIa"/>
    <property type="match status" value="1"/>
</dbReference>
<dbReference type="InterPro" id="IPR001349">
    <property type="entry name" value="Cyt_c_oxidase_su6a"/>
</dbReference>
<dbReference type="InterPro" id="IPR018507">
    <property type="entry name" value="Cyt_c_oxidase_su6a_CS"/>
</dbReference>
<dbReference type="InterPro" id="IPR036418">
    <property type="entry name" value="Cyt_c_oxidase_su6a_sf"/>
</dbReference>
<dbReference type="PANTHER" id="PTHR11504">
    <property type="entry name" value="CYTOCHROME C OXIDASE POLYPEPTIDE VIA"/>
    <property type="match status" value="1"/>
</dbReference>
<dbReference type="PANTHER" id="PTHR11504:SF4">
    <property type="entry name" value="CYTOCHROME C OXIDASE SUBUNIT 6A1, MITOCHONDRIAL"/>
    <property type="match status" value="1"/>
</dbReference>
<dbReference type="Pfam" id="PF02046">
    <property type="entry name" value="COX6A"/>
    <property type="match status" value="1"/>
</dbReference>
<dbReference type="PIRSF" id="PIRSF000277">
    <property type="entry name" value="COX6A1"/>
    <property type="match status" value="1"/>
</dbReference>
<dbReference type="SUPFAM" id="SSF81411">
    <property type="entry name" value="Mitochondrial cytochrome c oxidase subunit VIa"/>
    <property type="match status" value="1"/>
</dbReference>
<dbReference type="PROSITE" id="PS01329">
    <property type="entry name" value="COX6A"/>
    <property type="match status" value="1"/>
</dbReference>
<gene>
    <name type="primary">COX6A1</name>
    <name type="synonym">COX6AL</name>
</gene>
<accession>P12074</accession>
<accession>B2R500</accession>
<accession>O43714</accession>
<accession>Q32Q37</accession>
<sequence length="109" mass="12155">MAVVGVSSVSRLLGRSRPQLGRPMSSGAHGEEGSARMWKTLTFFVALPGVAVSMLNVYLKSHHGEHERPEFIAYPHLRIRTKPFPWGDGNHTLFHNPHVNPLPTGYEDE</sequence>
<protein>
    <recommendedName>
        <fullName>Cytochrome c oxidase subunit 6A1, mitochondrial</fullName>
    </recommendedName>
    <alternativeName>
        <fullName>Cytochrome c oxidase polypeptide VIa-liver</fullName>
    </alternativeName>
    <alternativeName>
        <fullName>Cytochrome c oxidase subunit VIA-liver</fullName>
        <shortName>COX VIa-L</shortName>
    </alternativeName>
</protein>
<feature type="transit peptide" description="Mitochondrion" evidence="3">
    <location>
        <begin position="1"/>
        <end position="24"/>
    </location>
</feature>
<feature type="chain" id="PRO_0000006119" description="Cytochrome c oxidase subunit 6A1, mitochondrial">
    <location>
        <begin position="25"/>
        <end position="109"/>
    </location>
</feature>
<feature type="topological domain" description="Mitochondrial matrix" evidence="6">
    <location>
        <begin position="25"/>
        <end position="34"/>
    </location>
</feature>
<feature type="transmembrane region" description="Helical" evidence="1">
    <location>
        <begin position="35"/>
        <end position="59"/>
    </location>
</feature>
<feature type="topological domain" description="Mitochondrial intermembrane" evidence="6">
    <location>
        <begin position="60"/>
        <end position="109"/>
    </location>
</feature>
<comment type="function">
    <text evidence="2">Component of the cytochrome c oxidase, the last enzyme in the mitochondrial electron transport chain which drives oxidative phosphorylation. The respiratory chain contains 3 multisubunit complexes succinate dehydrogenase (complex II, CII), ubiquinol-cytochrome c oxidoreductase (cytochrome b-c1 complex, complex III, CIII) and cytochrome c oxidase (complex IV, CIV), that cooperate to transfer electrons derived from NADH and succinate to molecular oxygen, creating an electrochemical gradient over the inner membrane that drives transmembrane transport and the ATP synthase. Cytochrome c oxidase is the component of the respiratory chain that catalyzes the reduction of oxygen to water. Electrons originating from reduced cytochrome c in the intermembrane space (IMS) are transferred via the dinuclear copper A center (CU(A)) of subunit 2 and heme A of subunit 1 to the active site in subunit 1, a binuclear center (BNC) formed by heme A3 and copper B (CU(B)). The BNC reduces molecular oxygen to 2 water molecules unsing 4 electrons from cytochrome c in the IMS and 4 protons from the mitochondrial matrix.</text>
</comment>
<comment type="pathway">
    <text evidence="2">Energy metabolism; oxidative phosphorylation.</text>
</comment>
<comment type="subunit">
    <text evidence="5 6">Component of the cytochrome c oxidase (complex IV, CIV), a multisubunit enzyme composed of 14 subunits. The complex is composed of a catalytic core of 3 subunits MT-CO1, MT-CO2 and MT-CO3, encoded in the mitochondrial DNA, and 11 supernumerary subunits COX4I1 (or COX4I2), COX5A, COX5B, COX6A1 (or COX6A2), COX6B1 (or COX6B2), COX6C, COX7A2 (or COX7A1), COX7B, COX7C, COX8A and NDUFA4, which are encoded in the nuclear genome (PubMed:30030519). The complex exists as a monomer or a dimer and forms supercomplexes (SCs) in the inner mitochondrial membrane with NADH-ubiquinone oxidoreductase (complex I, CI) and ubiquinol-cytochrome c oxidoreductase (cytochrome b-c1 complex, complex III, CIII), resulting in different assemblies (supercomplex SCI(1)III(2)IV(1) and megacomplex MCI(2)III(2)IV(2)) (PubMed:28844695).</text>
</comment>
<comment type="interaction">
    <interactant intactId="EBI-2115950">
        <id>P12074</id>
    </interactant>
    <interactant intactId="EBI-466029">
        <id>P42858</id>
        <label>HTT</label>
    </interactant>
    <organismsDiffer>false</organismsDiffer>
    <experiments>4</experiments>
</comment>
<comment type="interaction">
    <interactant intactId="EBI-2115950">
        <id>P12074</id>
    </interactant>
    <interactant intactId="EBI-1044504">
        <id>Q9BS40</id>
        <label>LXN</label>
    </interactant>
    <organismsDiffer>false</organismsDiffer>
    <experiments>3</experiments>
</comment>
<comment type="subcellular location">
    <subcellularLocation>
        <location evidence="6">Mitochondrion inner membrane</location>
        <topology evidence="6">Single-pass membrane protein</topology>
    </subcellularLocation>
</comment>
<comment type="disease" evidence="4">
    <disease id="DI-04254">
        <name>Charcot-Marie-Tooth disease, recessive intermediate D</name>
        <acronym>CMTRID</acronym>
        <description>A form of Charcot-Marie-Tooth disease, a disorder of the peripheral nervous system, characterized by progressive weakness and atrophy, initially of the peroneal muscles and later of the distal muscles of the arms. Recessive intermediate forms of Charcot-Marie-Tooth disease are characterized by clinical and pathologic features intermediate between demyelinating and axonal peripheral neuropathies, and motor median nerve conduction velocities ranging from 25 to 45 m/sec.</description>
        <dbReference type="MIM" id="616039"/>
    </disease>
    <text>The disease is caused by variants affecting the gene represented in this entry.</text>
</comment>
<comment type="similarity">
    <text evidence="7">Belongs to the cytochrome c oxidase subunit 6A family.</text>
</comment>
<comment type="sequence caution" evidence="7">
    <conflict type="frameshift">
        <sequence resource="EMBL-CDS" id="CAA33392"/>
    </conflict>
</comment>
<proteinExistence type="evidence at protein level"/>
<name>CX6A1_HUMAN</name>
<organism>
    <name type="scientific">Homo sapiens</name>
    <name type="common">Human</name>
    <dbReference type="NCBI Taxonomy" id="9606"/>
    <lineage>
        <taxon>Eukaryota</taxon>
        <taxon>Metazoa</taxon>
        <taxon>Chordata</taxon>
        <taxon>Craniata</taxon>
        <taxon>Vertebrata</taxon>
        <taxon>Euteleostomi</taxon>
        <taxon>Mammalia</taxon>
        <taxon>Eutheria</taxon>
        <taxon>Euarchontoglires</taxon>
        <taxon>Primates</taxon>
        <taxon>Haplorrhini</taxon>
        <taxon>Catarrhini</taxon>
        <taxon>Hominidae</taxon>
        <taxon>Homo</taxon>
    </lineage>
</organism>